<keyword id="KW-0012">Acyltransferase</keyword>
<keyword id="KW-0025">Alternative splicing</keyword>
<keyword id="KW-1003">Cell membrane</keyword>
<keyword id="KW-0333">Golgi apparatus</keyword>
<keyword id="KW-0449">Lipoprotein</keyword>
<keyword id="KW-0472">Membrane</keyword>
<keyword id="KW-0564">Palmitate</keyword>
<keyword id="KW-1185">Reference proteome</keyword>
<keyword id="KW-0808">Transferase</keyword>
<keyword id="KW-0812">Transmembrane</keyword>
<keyword id="KW-1133">Transmembrane helix</keyword>
<organism evidence="12">
    <name type="scientific">Drosophila melanogaster</name>
    <name type="common">Fruit fly</name>
    <dbReference type="NCBI Taxonomy" id="7227"/>
    <lineage>
        <taxon>Eukaryota</taxon>
        <taxon>Metazoa</taxon>
        <taxon>Ecdysozoa</taxon>
        <taxon>Arthropoda</taxon>
        <taxon>Hexapoda</taxon>
        <taxon>Insecta</taxon>
        <taxon>Pterygota</taxon>
        <taxon>Neoptera</taxon>
        <taxon>Endopterygota</taxon>
        <taxon>Diptera</taxon>
        <taxon>Brachycera</taxon>
        <taxon>Muscomorpha</taxon>
        <taxon>Ephydroidea</taxon>
        <taxon>Drosophilidae</taxon>
        <taxon>Drosophila</taxon>
        <taxon>Sophophora</taxon>
    </lineage>
</organism>
<sequence>MPKCDVKTRYIPATFAWIVLLLTTFLFFFYPCQFYVKSHPWVLAYQGVITFFVLANFTLATFMDPGIIPKASPDEDCEEELRAPLYKNAEINGITVKMKWCVTCKFYRPPRCSHCSVCNHCIETFDHHCPWVNNCIGRRNYRFFFFFLVSLSIHMLSIFSLCLVYVLKIMPNIKDTAPIVAIILMGLVTILAIPIFGLTGFHMVLVSRGRTTNEQVTGKFKGGYNPFSRGCWHNCCYTQFGPQYPSLLNPKKYASRRSQVQNQAISTICNDRSGQQTGAGSGAGGNGTAAVSGGGGGVGSGGGMRGTAVQYSPRSFYDASREKRGIQVKTYMAEGNGYNQRSGSTTLYSKLSPGRECSDTDLEPPPASQSQDCEPTPPLQRHNSSSFYLPQVSDSGGLNGSVSTGGGGGGDSPRHMRLYHPRHSPHARPRGLDPQRGYTSDALSPDHPVGYGVGVNGSQQQQQQALAAAAAAAAVAAQNQRSATTTATPTMQQRIKPLGVATPLVMASPVRRSNPGTPTQPRRPDFIGLNAQAVAQQQQQQQQAAAAAAAAYYEYTSGLPPQHPQAPSIQQQQQQLLLQQQRVLMQHQQQQQALQQQQQQQQQAAVHAAHPQHAALAQAAYGGSPQRRFLSEGELVRQGAGGGVAGGELSYARSNNTVDNIRELAGSPQRGVYMWKDTSPGFTNNAGQQQQQQQQAQQVVSSGIGSSAGTLSSSGAAAGVMPHAQYMTAGGGAHPLIMTHSRLQDYTIQQQQQQQQQQAAAAAAASYHRSNPTSPTTMPQVSGAGQSYILRYGGGGAVGAAGSSGSLASVTASNPATGGGGYQPALRGGVAVFPPNPMGNQGGGNLQTQPSPQIKRKQTPTRPMSFVRALEMADSMEMQSLEQQQNGGIPGSGSVGNNQQAGGGGGGHLMQSNASNSGTPDRASIYDMNYEISV</sequence>
<gene>
    <name evidence="8 11" type="primary">Zdhhc8</name>
    <name evidence="10" type="synonym">anon-Pen16</name>
    <name evidence="10" type="synonym">Dm_X:47283</name>
    <name evidence="10" type="synonym">p16</name>
    <name evidence="11" type="ORF">CG34449</name>
</gene>
<protein>
    <recommendedName>
        <fullName evidence="9">Palmitoyltransferase ZDHHC8</fullName>
        <ecNumber evidence="3">2.3.1.225</ecNumber>
    </recommendedName>
    <alternativeName>
        <fullName evidence="3">Zinc finger DHHC domain-containing protein 8</fullName>
    </alternativeName>
    <alternativeName>
        <fullName evidence="8 11">Zinc finger DHHC-type containing 8</fullName>
    </alternativeName>
</protein>
<feature type="chain" id="PRO_0000453525" description="Palmitoyltransferase ZDHHC8" evidence="9">
    <location>
        <begin position="1"/>
        <end position="934"/>
    </location>
</feature>
<feature type="topological domain" description="Cytoplasmic" evidence="9">
    <location>
        <begin position="1"/>
        <end position="9"/>
    </location>
</feature>
<feature type="transmembrane region" description="Helical" evidence="4">
    <location>
        <begin position="10"/>
        <end position="30"/>
    </location>
</feature>
<feature type="topological domain" description="Extracellular" evidence="9">
    <location>
        <begin position="31"/>
        <end position="47"/>
    </location>
</feature>
<feature type="transmembrane region" description="Helical" evidence="4">
    <location>
        <begin position="48"/>
        <end position="68"/>
    </location>
</feature>
<feature type="topological domain" description="Cytoplasmic" evidence="9">
    <location>
        <begin position="69"/>
        <end position="142"/>
    </location>
</feature>
<feature type="transmembrane region" description="Helical" evidence="4">
    <location>
        <begin position="143"/>
        <end position="163"/>
    </location>
</feature>
<feature type="topological domain" description="Extracellular" evidence="9">
    <location>
        <begin position="164"/>
        <end position="177"/>
    </location>
</feature>
<feature type="transmembrane region" description="Helical" evidence="4">
    <location>
        <begin position="178"/>
        <end position="198"/>
    </location>
</feature>
<feature type="topological domain" description="Cytoplasmic" evidence="9">
    <location>
        <begin position="199"/>
        <end position="934"/>
    </location>
</feature>
<feature type="domain" description="DHHC" evidence="5">
    <location>
        <begin position="99"/>
        <end position="149"/>
    </location>
</feature>
<feature type="region of interest" description="Disordered" evidence="6">
    <location>
        <begin position="336"/>
        <end position="440"/>
    </location>
</feature>
<feature type="region of interest" description="Disordered" evidence="6">
    <location>
        <begin position="506"/>
        <end position="525"/>
    </location>
</feature>
<feature type="region of interest" description="Disordered" evidence="6">
    <location>
        <begin position="669"/>
        <end position="705"/>
    </location>
</feature>
<feature type="region of interest" description="Disordered" evidence="6">
    <location>
        <begin position="751"/>
        <end position="780"/>
    </location>
</feature>
<feature type="region of interest" description="Disordered" evidence="6">
    <location>
        <begin position="835"/>
        <end position="862"/>
    </location>
</feature>
<feature type="region of interest" description="Disordered" evidence="6">
    <location>
        <begin position="881"/>
        <end position="934"/>
    </location>
</feature>
<feature type="compositionally biased region" description="Polar residues" evidence="6">
    <location>
        <begin position="337"/>
        <end position="349"/>
    </location>
</feature>
<feature type="compositionally biased region" description="Polar residues" evidence="6">
    <location>
        <begin position="381"/>
        <end position="394"/>
    </location>
</feature>
<feature type="compositionally biased region" description="Gly residues" evidence="6">
    <location>
        <begin position="397"/>
        <end position="411"/>
    </location>
</feature>
<feature type="compositionally biased region" description="Basic residues" evidence="6">
    <location>
        <begin position="415"/>
        <end position="429"/>
    </location>
</feature>
<feature type="compositionally biased region" description="Low complexity" evidence="6">
    <location>
        <begin position="688"/>
        <end position="705"/>
    </location>
</feature>
<feature type="compositionally biased region" description="Low complexity" evidence="6">
    <location>
        <begin position="751"/>
        <end position="765"/>
    </location>
</feature>
<feature type="compositionally biased region" description="Polar residues" evidence="6">
    <location>
        <begin position="768"/>
        <end position="780"/>
    </location>
</feature>
<feature type="compositionally biased region" description="Polar residues" evidence="6">
    <location>
        <begin position="910"/>
        <end position="919"/>
    </location>
</feature>
<feature type="active site" description="S-palmitoyl cysteine intermediate" evidence="5">
    <location>
        <position position="129"/>
    </location>
</feature>
<feature type="splice variant" id="VSP_061158" description="In isoform G." evidence="9">
    <location>
        <begin position="71"/>
        <end position="75"/>
    </location>
</feature>
<feature type="splice variant" id="VSP_061159" description="In isoform B, isoform G and isoform C." evidence="9">
    <location>
        <begin position="328"/>
        <end position="350"/>
    </location>
</feature>
<feature type="splice variant" id="VSP_061160" description="In isoform F." evidence="9">
    <location>
        <begin position="430"/>
        <end position="511"/>
    </location>
</feature>
<feature type="splice variant" id="VSP_061161" description="In isoform D and isoform C." evidence="9">
    <original>RSNPGTPTQPRR</original>
    <variation>SQYSNSENSTNS</variation>
    <location>
        <begin position="512"/>
        <end position="523"/>
    </location>
</feature>
<feature type="splice variant" id="VSP_061162" description="In isoform D and isoform C." evidence="9">
    <location>
        <begin position="524"/>
        <end position="934"/>
    </location>
</feature>
<evidence type="ECO:0000250" key="1">
    <source>
        <dbReference type="UniProtKB" id="Q5Y5T5"/>
    </source>
</evidence>
<evidence type="ECO:0000250" key="2">
    <source>
        <dbReference type="UniProtKB" id="Q8IUH5"/>
    </source>
</evidence>
<evidence type="ECO:0000250" key="3">
    <source>
        <dbReference type="UniProtKB" id="Q9ULC8"/>
    </source>
</evidence>
<evidence type="ECO:0000255" key="4"/>
<evidence type="ECO:0000255" key="5">
    <source>
        <dbReference type="PROSITE-ProRule" id="PRU00067"/>
    </source>
</evidence>
<evidence type="ECO:0000256" key="6">
    <source>
        <dbReference type="SAM" id="MobiDB-lite"/>
    </source>
</evidence>
<evidence type="ECO:0000269" key="7">
    <source>
    </source>
</evidence>
<evidence type="ECO:0000303" key="8">
    <source>
    </source>
</evidence>
<evidence type="ECO:0000305" key="9"/>
<evidence type="ECO:0000312" key="10">
    <source>
        <dbReference type="EMBL" id="AAF46491.4"/>
    </source>
</evidence>
<evidence type="ECO:0000312" key="11">
    <source>
        <dbReference type="FlyBase" id="FBgn0085478"/>
    </source>
</evidence>
<evidence type="ECO:0000312" key="12">
    <source>
        <dbReference type="Proteomes" id="UP000000803"/>
    </source>
</evidence>
<dbReference type="EC" id="2.3.1.225" evidence="3"/>
<dbReference type="EMBL" id="AE014298">
    <property type="protein sequence ID" value="AAF46491.4"/>
    <property type="molecule type" value="Genomic_DNA"/>
</dbReference>
<dbReference type="EMBL" id="AE014298">
    <property type="protein sequence ID" value="AFH07306.1"/>
    <property type="molecule type" value="Genomic_DNA"/>
</dbReference>
<dbReference type="EMBL" id="AE014298">
    <property type="protein sequence ID" value="ABW09368.1"/>
    <property type="molecule type" value="Genomic_DNA"/>
</dbReference>
<dbReference type="EMBL" id="AE014298">
    <property type="protein sequence ID" value="ABW09369.1"/>
    <property type="molecule type" value="Genomic_DNA"/>
</dbReference>
<dbReference type="EMBL" id="AE014298">
    <property type="protein sequence ID" value="AHN59522.1"/>
    <property type="molecule type" value="Genomic_DNA"/>
</dbReference>
<dbReference type="EMBL" id="AE014298">
    <property type="protein sequence ID" value="AHN59523.1"/>
    <property type="molecule type" value="Genomic_DNA"/>
</dbReference>
<dbReference type="RefSeq" id="NP_001096921.1">
    <molecule id="Q9W345-2"/>
    <property type="nucleotide sequence ID" value="NM_001103451.3"/>
</dbReference>
<dbReference type="RefSeq" id="NP_001096922.1">
    <molecule id="Q9W345-6"/>
    <property type="nucleotide sequence ID" value="NM_001103452.4"/>
</dbReference>
<dbReference type="RefSeq" id="NP_001245592.1">
    <molecule id="Q9W345-5"/>
    <property type="nucleotide sequence ID" value="NM_001258663.3"/>
</dbReference>
<dbReference type="RefSeq" id="NP_001285051.1">
    <molecule id="Q9W345-4"/>
    <property type="nucleotide sequence ID" value="NM_001298122.1"/>
</dbReference>
<dbReference type="RefSeq" id="NP_001285052.1">
    <molecule id="Q9W345-3"/>
    <property type="nucleotide sequence ID" value="NM_001298123.1"/>
</dbReference>
<dbReference type="RefSeq" id="NP_727339.3">
    <molecule id="Q9W345-1"/>
    <property type="nucleotide sequence ID" value="NM_167189.6"/>
</dbReference>
<dbReference type="SMR" id="Q9W345"/>
<dbReference type="IntAct" id="Q9W345">
    <property type="interactions" value="8"/>
</dbReference>
<dbReference type="GlyGen" id="Q9W345">
    <property type="glycosylation" value="1 site"/>
</dbReference>
<dbReference type="EnsemblMetazoa" id="FBtr0112753">
    <molecule id="Q9W345-1"/>
    <property type="protein sequence ID" value="FBpp0111665"/>
    <property type="gene ID" value="FBgn0085478"/>
</dbReference>
<dbReference type="EnsemblMetazoa" id="FBtr0112754">
    <molecule id="Q9W345-2"/>
    <property type="protein sequence ID" value="FBpp0111666"/>
    <property type="gene ID" value="FBgn0085478"/>
</dbReference>
<dbReference type="EnsemblMetazoa" id="FBtr0112755">
    <molecule id="Q9W345-6"/>
    <property type="protein sequence ID" value="FBpp0111667"/>
    <property type="gene ID" value="FBgn0085478"/>
</dbReference>
<dbReference type="EnsemblMetazoa" id="FBtr0308591">
    <molecule id="Q9W345-5"/>
    <property type="protein sequence ID" value="FBpp0300815"/>
    <property type="gene ID" value="FBgn0085478"/>
</dbReference>
<dbReference type="EnsemblMetazoa" id="FBtr0343028">
    <molecule id="Q9W345-4"/>
    <property type="protein sequence ID" value="FBpp0309780"/>
    <property type="gene ID" value="FBgn0085478"/>
</dbReference>
<dbReference type="EnsemblMetazoa" id="FBtr0343029">
    <molecule id="Q9W345-3"/>
    <property type="protein sequence ID" value="FBpp0309781"/>
    <property type="gene ID" value="FBgn0085478"/>
</dbReference>
<dbReference type="GeneID" id="31887"/>
<dbReference type="KEGG" id="dme:Dmel_CG34449"/>
<dbReference type="UCSC" id="CG34449-RA">
    <molecule id="Q9W345-1"/>
    <property type="organism name" value="d. melanogaster"/>
</dbReference>
<dbReference type="UCSC" id="CG34449-RB">
    <property type="organism name" value="d. melanogaster"/>
</dbReference>
<dbReference type="UCSC" id="CG34449-RC">
    <property type="organism name" value="d. melanogaster"/>
</dbReference>
<dbReference type="AGR" id="FB:FBgn0085478"/>
<dbReference type="CTD" id="29801"/>
<dbReference type="FlyBase" id="FBgn0085478">
    <property type="gene designation" value="Zdhhc8"/>
</dbReference>
<dbReference type="VEuPathDB" id="VectorBase:FBgn0085478"/>
<dbReference type="eggNOG" id="KOG1311">
    <property type="taxonomic scope" value="Eukaryota"/>
</dbReference>
<dbReference type="GeneTree" id="ENSGT00940000175425"/>
<dbReference type="HOGENOM" id="CLU_010307_0_0_1"/>
<dbReference type="InParanoid" id="Q9W345"/>
<dbReference type="OMA" id="CLRNCCY"/>
<dbReference type="OrthoDB" id="4096362at2759"/>
<dbReference type="PhylomeDB" id="Q9W345"/>
<dbReference type="Reactome" id="R-DME-8963896">
    <property type="pathway name" value="HDL assembly"/>
</dbReference>
<dbReference type="BioGRID-ORCS" id="31887">
    <property type="hits" value="0 hits in 3 CRISPR screens"/>
</dbReference>
<dbReference type="GenomeRNAi" id="31887"/>
<dbReference type="PRO" id="PR:Q9W345"/>
<dbReference type="Proteomes" id="UP000000803">
    <property type="component" value="Chromosome X"/>
</dbReference>
<dbReference type="Bgee" id="FBgn0085478">
    <property type="expression patterns" value="Expressed in distal medullary amacrine neuron Dm11 in insect head and 286 other cell types or tissues"/>
</dbReference>
<dbReference type="ExpressionAtlas" id="Q9W345">
    <property type="expression patterns" value="baseline and differential"/>
</dbReference>
<dbReference type="GO" id="GO:0000139">
    <property type="term" value="C:Golgi membrane"/>
    <property type="evidence" value="ECO:0007669"/>
    <property type="project" value="UniProtKB-SubCell"/>
</dbReference>
<dbReference type="GO" id="GO:0005886">
    <property type="term" value="C:plasma membrane"/>
    <property type="evidence" value="ECO:0007669"/>
    <property type="project" value="UniProtKB-SubCell"/>
</dbReference>
<dbReference type="GO" id="GO:0016409">
    <property type="term" value="F:palmitoyltransferase activity"/>
    <property type="evidence" value="ECO:0000318"/>
    <property type="project" value="GO_Central"/>
</dbReference>
<dbReference type="GO" id="GO:0019706">
    <property type="term" value="F:protein-cysteine S-palmitoyltransferase activity"/>
    <property type="evidence" value="ECO:0000250"/>
    <property type="project" value="FlyBase"/>
</dbReference>
<dbReference type="InterPro" id="IPR001594">
    <property type="entry name" value="Palmitoyltrfase_DHHC"/>
</dbReference>
<dbReference type="PANTHER" id="PTHR12349">
    <property type="entry name" value="ANKYRIN REPEAT AND LEM DOMAIN-CONTAINING PROTEIN 2"/>
    <property type="match status" value="1"/>
</dbReference>
<dbReference type="PANTHER" id="PTHR12349:SF2">
    <property type="entry name" value="PALMITOYLTRANSFERASE ZDHHC8"/>
    <property type="match status" value="1"/>
</dbReference>
<dbReference type="Pfam" id="PF01529">
    <property type="entry name" value="DHHC"/>
    <property type="match status" value="1"/>
</dbReference>
<dbReference type="PROSITE" id="PS50216">
    <property type="entry name" value="DHHC"/>
    <property type="match status" value="1"/>
</dbReference>
<comment type="function">
    <text evidence="1 3 7">Palmitoyltransferase that catalyzes the addition of palmitate onto various protein substrates and therefore functions in several unrelated biological processes (By similarity). Regulates tissue growth possibly by regulating Ras64B protein stability (PubMed:30735487). May regulate CG34450 mRNA levels (PubMed:30735487).</text>
</comment>
<comment type="catalytic activity">
    <reaction evidence="3">
        <text>L-cysteinyl-[protein] + hexadecanoyl-CoA = S-hexadecanoyl-L-cysteinyl-[protein] + CoA</text>
        <dbReference type="Rhea" id="RHEA:36683"/>
        <dbReference type="Rhea" id="RHEA-COMP:10131"/>
        <dbReference type="Rhea" id="RHEA-COMP:11032"/>
        <dbReference type="ChEBI" id="CHEBI:29950"/>
        <dbReference type="ChEBI" id="CHEBI:57287"/>
        <dbReference type="ChEBI" id="CHEBI:57379"/>
        <dbReference type="ChEBI" id="CHEBI:74151"/>
        <dbReference type="EC" id="2.3.1.225"/>
    </reaction>
    <physiologicalReaction direction="left-to-right" evidence="3">
        <dbReference type="Rhea" id="RHEA:36684"/>
    </physiologicalReaction>
</comment>
<comment type="subcellular location">
    <subcellularLocation>
        <location evidence="7">Golgi apparatus membrane</location>
        <topology evidence="4">Multi-pass membrane protein</topology>
    </subcellularLocation>
    <subcellularLocation>
        <location evidence="7">Cell membrane</location>
        <topology evidence="4">Multi-pass membrane protein</topology>
    </subcellularLocation>
</comment>
<comment type="alternative products">
    <event type="alternative splicing"/>
    <isoform>
        <id>Q9W345-1</id>
        <name evidence="11">A</name>
        <sequence type="displayed"/>
    </isoform>
    <isoform>
        <id>Q9W345-2</id>
        <name evidence="11">B</name>
        <sequence type="described" ref="VSP_061159"/>
    </isoform>
    <isoform>
        <id>Q9W345-6</id>
        <name evidence="11">C</name>
        <sequence type="described" ref="VSP_061159 VSP_061161 VSP_061162"/>
    </isoform>
    <isoform>
        <id>Q9W345-5</id>
        <name evidence="11">D</name>
        <sequence type="described" ref="VSP_061161 VSP_061162"/>
    </isoform>
    <isoform>
        <id>Q9W345-4</id>
        <name evidence="11">F</name>
        <sequence type="described" ref="VSP_061160"/>
    </isoform>
    <isoform>
        <id>Q9W345-3</id>
        <name evidence="11">G</name>
        <sequence type="described" ref="VSP_061158 VSP_061159"/>
    </isoform>
</comment>
<comment type="domain">
    <text evidence="2">The DHHC domain is required for palmitoyltransferase activity.</text>
</comment>
<comment type="disruption phenotype">
    <text evidence="7">Lethal at larval stage (PubMed:30735487). RNAi-mediated knockdown results in extra vein material (PubMed:30735487). RNAi-mediated knockdown in the wing results in tissue overgrowth due to enhanced cell proliferation (PubMed:30735487).</text>
</comment>
<comment type="similarity">
    <text evidence="9">Belongs to the DHHC palmitoyltransferase family. ERF2/ZDHHC9 subfamily.</text>
</comment>
<accession>Q9W345</accession>
<accession>A8JUM2</accession>
<accession>A8JUM5</accession>
<accession>M9NGX0</accession>
<accession>X2JE99</accession>
<accession>X2JJ56</accession>
<reference evidence="12" key="1">
    <citation type="journal article" date="2000" name="Science">
        <title>The genome sequence of Drosophila melanogaster.</title>
        <authorList>
            <person name="Adams M.D."/>
            <person name="Celniker S.E."/>
            <person name="Holt R.A."/>
            <person name="Evans C.A."/>
            <person name="Gocayne J.D."/>
            <person name="Amanatides P.G."/>
            <person name="Scherer S.E."/>
            <person name="Li P.W."/>
            <person name="Hoskins R.A."/>
            <person name="Galle R.F."/>
            <person name="George R.A."/>
            <person name="Lewis S.E."/>
            <person name="Richards S."/>
            <person name="Ashburner M."/>
            <person name="Henderson S.N."/>
            <person name="Sutton G.G."/>
            <person name="Wortman J.R."/>
            <person name="Yandell M.D."/>
            <person name="Zhang Q."/>
            <person name="Chen L.X."/>
            <person name="Brandon R.C."/>
            <person name="Rogers Y.-H.C."/>
            <person name="Blazej R.G."/>
            <person name="Champe M."/>
            <person name="Pfeiffer B.D."/>
            <person name="Wan K.H."/>
            <person name="Doyle C."/>
            <person name="Baxter E.G."/>
            <person name="Helt G."/>
            <person name="Nelson C.R."/>
            <person name="Miklos G.L.G."/>
            <person name="Abril J.F."/>
            <person name="Agbayani A."/>
            <person name="An H.-J."/>
            <person name="Andrews-Pfannkoch C."/>
            <person name="Baldwin D."/>
            <person name="Ballew R.M."/>
            <person name="Basu A."/>
            <person name="Baxendale J."/>
            <person name="Bayraktaroglu L."/>
            <person name="Beasley E.M."/>
            <person name="Beeson K.Y."/>
            <person name="Benos P.V."/>
            <person name="Berman B.P."/>
            <person name="Bhandari D."/>
            <person name="Bolshakov S."/>
            <person name="Borkova D."/>
            <person name="Botchan M.R."/>
            <person name="Bouck J."/>
            <person name="Brokstein P."/>
            <person name="Brottier P."/>
            <person name="Burtis K.C."/>
            <person name="Busam D.A."/>
            <person name="Butler H."/>
            <person name="Cadieu E."/>
            <person name="Center A."/>
            <person name="Chandra I."/>
            <person name="Cherry J.M."/>
            <person name="Cawley S."/>
            <person name="Dahlke C."/>
            <person name="Davenport L.B."/>
            <person name="Davies P."/>
            <person name="de Pablos B."/>
            <person name="Delcher A."/>
            <person name="Deng Z."/>
            <person name="Mays A.D."/>
            <person name="Dew I."/>
            <person name="Dietz S.M."/>
            <person name="Dodson K."/>
            <person name="Doup L.E."/>
            <person name="Downes M."/>
            <person name="Dugan-Rocha S."/>
            <person name="Dunkov B.C."/>
            <person name="Dunn P."/>
            <person name="Durbin K.J."/>
            <person name="Evangelista C.C."/>
            <person name="Ferraz C."/>
            <person name="Ferriera S."/>
            <person name="Fleischmann W."/>
            <person name="Fosler C."/>
            <person name="Gabrielian A.E."/>
            <person name="Garg N.S."/>
            <person name="Gelbart W.M."/>
            <person name="Glasser K."/>
            <person name="Glodek A."/>
            <person name="Gong F."/>
            <person name="Gorrell J.H."/>
            <person name="Gu Z."/>
            <person name="Guan P."/>
            <person name="Harris M."/>
            <person name="Harris N.L."/>
            <person name="Harvey D.A."/>
            <person name="Heiman T.J."/>
            <person name="Hernandez J.R."/>
            <person name="Houck J."/>
            <person name="Hostin D."/>
            <person name="Houston K.A."/>
            <person name="Howland T.J."/>
            <person name="Wei M.-H."/>
            <person name="Ibegwam C."/>
            <person name="Jalali M."/>
            <person name="Kalush F."/>
            <person name="Karpen G.H."/>
            <person name="Ke Z."/>
            <person name="Kennison J.A."/>
            <person name="Ketchum K.A."/>
            <person name="Kimmel B.E."/>
            <person name="Kodira C.D."/>
            <person name="Kraft C.L."/>
            <person name="Kravitz S."/>
            <person name="Kulp D."/>
            <person name="Lai Z."/>
            <person name="Lasko P."/>
            <person name="Lei Y."/>
            <person name="Levitsky A.A."/>
            <person name="Li J.H."/>
            <person name="Li Z."/>
            <person name="Liang Y."/>
            <person name="Lin X."/>
            <person name="Liu X."/>
            <person name="Mattei B."/>
            <person name="McIntosh T.C."/>
            <person name="McLeod M.P."/>
            <person name="McPherson D."/>
            <person name="Merkulov G."/>
            <person name="Milshina N.V."/>
            <person name="Mobarry C."/>
            <person name="Morris J."/>
            <person name="Moshrefi A."/>
            <person name="Mount S.M."/>
            <person name="Moy M."/>
            <person name="Murphy B."/>
            <person name="Murphy L."/>
            <person name="Muzny D.M."/>
            <person name="Nelson D.L."/>
            <person name="Nelson D.R."/>
            <person name="Nelson K.A."/>
            <person name="Nixon K."/>
            <person name="Nusskern D.R."/>
            <person name="Pacleb J.M."/>
            <person name="Palazzolo M."/>
            <person name="Pittman G.S."/>
            <person name="Pan S."/>
            <person name="Pollard J."/>
            <person name="Puri V."/>
            <person name="Reese M.G."/>
            <person name="Reinert K."/>
            <person name="Remington K."/>
            <person name="Saunders R.D.C."/>
            <person name="Scheeler F."/>
            <person name="Shen H."/>
            <person name="Shue B.C."/>
            <person name="Siden-Kiamos I."/>
            <person name="Simpson M."/>
            <person name="Skupski M.P."/>
            <person name="Smith T.J."/>
            <person name="Spier E."/>
            <person name="Spradling A.C."/>
            <person name="Stapleton M."/>
            <person name="Strong R."/>
            <person name="Sun E."/>
            <person name="Svirskas R."/>
            <person name="Tector C."/>
            <person name="Turner R."/>
            <person name="Venter E."/>
            <person name="Wang A.H."/>
            <person name="Wang X."/>
            <person name="Wang Z.-Y."/>
            <person name="Wassarman D.A."/>
            <person name="Weinstock G.M."/>
            <person name="Weissenbach J."/>
            <person name="Williams S.M."/>
            <person name="Woodage T."/>
            <person name="Worley K.C."/>
            <person name="Wu D."/>
            <person name="Yang S."/>
            <person name="Yao Q.A."/>
            <person name="Ye J."/>
            <person name="Yeh R.-F."/>
            <person name="Zaveri J.S."/>
            <person name="Zhan M."/>
            <person name="Zhang G."/>
            <person name="Zhao Q."/>
            <person name="Zheng L."/>
            <person name="Zheng X.H."/>
            <person name="Zhong F.N."/>
            <person name="Zhong W."/>
            <person name="Zhou X."/>
            <person name="Zhu S.C."/>
            <person name="Zhu X."/>
            <person name="Smith H.O."/>
            <person name="Gibbs R.A."/>
            <person name="Myers E.W."/>
            <person name="Rubin G.M."/>
            <person name="Venter J.C."/>
        </authorList>
    </citation>
    <scope>NUCLEOTIDE SEQUENCE [LARGE SCALE GENOMIC DNA]</scope>
    <source>
        <strain evidence="12">Berkeley</strain>
    </source>
</reference>
<reference evidence="12" key="2">
    <citation type="journal article" date="2002" name="Genome Biol.">
        <title>Annotation of the Drosophila melanogaster euchromatic genome: a systematic review.</title>
        <authorList>
            <person name="Misra S."/>
            <person name="Crosby M.A."/>
            <person name="Mungall C.J."/>
            <person name="Matthews B.B."/>
            <person name="Campbell K.S."/>
            <person name="Hradecky P."/>
            <person name="Huang Y."/>
            <person name="Kaminker J.S."/>
            <person name="Millburn G.H."/>
            <person name="Prochnik S.E."/>
            <person name="Smith C.D."/>
            <person name="Tupy J.L."/>
            <person name="Whitfield E.J."/>
            <person name="Bayraktaroglu L."/>
            <person name="Berman B.P."/>
            <person name="Bettencourt B.R."/>
            <person name="Celniker S.E."/>
            <person name="de Grey A.D.N.J."/>
            <person name="Drysdale R.A."/>
            <person name="Harris N.L."/>
            <person name="Richter J."/>
            <person name="Russo S."/>
            <person name="Schroeder A.J."/>
            <person name="Shu S.Q."/>
            <person name="Stapleton M."/>
            <person name="Yamada C."/>
            <person name="Ashburner M."/>
            <person name="Gelbart W.M."/>
            <person name="Rubin G.M."/>
            <person name="Lewis S.E."/>
        </authorList>
    </citation>
    <scope>GENOME REANNOTATION</scope>
    <source>
        <strain evidence="12">Berkeley</strain>
    </source>
</reference>
<reference evidence="9" key="3">
    <citation type="journal article" date="2019" name="PLoS ONE">
        <title>Drosophila ZDHHC8 palmitoylates scribble and Ras64B and controls growth and viability.</title>
        <authorList>
            <person name="Strassburger K."/>
            <person name="Kang E."/>
            <person name="Teleman A.A."/>
        </authorList>
    </citation>
    <scope>FUNCTION</scope>
    <scope>SUBCELLULAR LOCATION</scope>
    <scope>DISRUPTION PHENOTYPE</scope>
</reference>
<name>ZDHC8_DROME</name>
<proteinExistence type="inferred from homology"/>